<accession>B8D8J7</accession>
<protein>
    <recommendedName>
        <fullName evidence="1">Large ribosomal subunit protein bL12</fullName>
    </recommendedName>
    <alternativeName>
        <fullName evidence="2">50S ribosomal protein L7/L12</fullName>
    </alternativeName>
</protein>
<keyword id="KW-0687">Ribonucleoprotein</keyword>
<keyword id="KW-0689">Ribosomal protein</keyword>
<name>RL7_BUCA5</name>
<evidence type="ECO:0000255" key="1">
    <source>
        <dbReference type="HAMAP-Rule" id="MF_00368"/>
    </source>
</evidence>
<evidence type="ECO:0000305" key="2"/>
<proteinExistence type="inferred from homology"/>
<sequence>MSITKEQILEAISEMSVMNVVDLITAMEEKFGVSASMSINSNNHNEKDLREEKTEFDIFLKVIGPNKVSVIKTVRSATGLGLKEAKDLVESAPTVLKENISKEDAESLKKTLEDVGAEIEIK</sequence>
<gene>
    <name evidence="1" type="primary">rplL</name>
    <name type="ordered locus">BUAP5A_034</name>
</gene>
<feature type="chain" id="PRO_1000195777" description="Large ribosomal subunit protein bL12">
    <location>
        <begin position="1"/>
        <end position="122"/>
    </location>
</feature>
<comment type="function">
    <text evidence="1">Forms part of the ribosomal stalk which helps the ribosome interact with GTP-bound translation factors. Is thus essential for accurate translation.</text>
</comment>
<comment type="subunit">
    <text evidence="1">Homodimer. Part of the ribosomal stalk of the 50S ribosomal subunit. Forms a multimeric L10(L12)X complex, where L10 forms an elongated spine to which 2 to 4 L12 dimers bind in a sequential fashion. Binds GTP-bound translation factors.</text>
</comment>
<comment type="similarity">
    <text evidence="1">Belongs to the bacterial ribosomal protein bL12 family.</text>
</comment>
<reference key="1">
    <citation type="journal article" date="2009" name="Science">
        <title>The dynamics and time scale of ongoing genomic erosion in symbiotic bacteria.</title>
        <authorList>
            <person name="Moran N.A."/>
            <person name="McLaughlin H.J."/>
            <person name="Sorek R."/>
        </authorList>
    </citation>
    <scope>NUCLEOTIDE SEQUENCE [LARGE SCALE GENOMIC DNA]</scope>
    <source>
        <strain>5A</strain>
    </source>
</reference>
<organism>
    <name type="scientific">Buchnera aphidicola subsp. Acyrthosiphon pisum (strain 5A)</name>
    <dbReference type="NCBI Taxonomy" id="563178"/>
    <lineage>
        <taxon>Bacteria</taxon>
        <taxon>Pseudomonadati</taxon>
        <taxon>Pseudomonadota</taxon>
        <taxon>Gammaproteobacteria</taxon>
        <taxon>Enterobacterales</taxon>
        <taxon>Erwiniaceae</taxon>
        <taxon>Buchnera</taxon>
    </lineage>
</organism>
<dbReference type="EMBL" id="CP001161">
    <property type="protein sequence ID" value="ACL30419.1"/>
    <property type="molecule type" value="Genomic_DNA"/>
</dbReference>
<dbReference type="RefSeq" id="WP_009873996.1">
    <property type="nucleotide sequence ID" value="NC_011833.1"/>
</dbReference>
<dbReference type="SMR" id="B8D8J7"/>
<dbReference type="KEGG" id="bap:BUAP5A_034"/>
<dbReference type="HOGENOM" id="CLU_086499_3_2_6"/>
<dbReference type="OrthoDB" id="9811748at2"/>
<dbReference type="Proteomes" id="UP000006904">
    <property type="component" value="Chromosome"/>
</dbReference>
<dbReference type="GO" id="GO:0022625">
    <property type="term" value="C:cytosolic large ribosomal subunit"/>
    <property type="evidence" value="ECO:0007669"/>
    <property type="project" value="TreeGrafter"/>
</dbReference>
<dbReference type="GO" id="GO:0003729">
    <property type="term" value="F:mRNA binding"/>
    <property type="evidence" value="ECO:0007669"/>
    <property type="project" value="TreeGrafter"/>
</dbReference>
<dbReference type="GO" id="GO:0003735">
    <property type="term" value="F:structural constituent of ribosome"/>
    <property type="evidence" value="ECO:0007669"/>
    <property type="project" value="InterPro"/>
</dbReference>
<dbReference type="GO" id="GO:0006412">
    <property type="term" value="P:translation"/>
    <property type="evidence" value="ECO:0007669"/>
    <property type="project" value="UniProtKB-UniRule"/>
</dbReference>
<dbReference type="CDD" id="cd00387">
    <property type="entry name" value="Ribosomal_L7_L12"/>
    <property type="match status" value="1"/>
</dbReference>
<dbReference type="FunFam" id="3.30.1390.10:FF:000001">
    <property type="entry name" value="50S ribosomal protein L7/L12"/>
    <property type="match status" value="1"/>
</dbReference>
<dbReference type="Gene3D" id="3.30.1390.10">
    <property type="match status" value="1"/>
</dbReference>
<dbReference type="Gene3D" id="1.20.5.710">
    <property type="entry name" value="Single helix bin"/>
    <property type="match status" value="1"/>
</dbReference>
<dbReference type="HAMAP" id="MF_00368">
    <property type="entry name" value="Ribosomal_bL12"/>
    <property type="match status" value="1"/>
</dbReference>
<dbReference type="InterPro" id="IPR000206">
    <property type="entry name" value="Ribosomal_bL12"/>
</dbReference>
<dbReference type="InterPro" id="IPR013823">
    <property type="entry name" value="Ribosomal_bL12_C"/>
</dbReference>
<dbReference type="InterPro" id="IPR014719">
    <property type="entry name" value="Ribosomal_bL12_C/ClpS-like"/>
</dbReference>
<dbReference type="InterPro" id="IPR008932">
    <property type="entry name" value="Ribosomal_bL12_oligo"/>
</dbReference>
<dbReference type="InterPro" id="IPR036235">
    <property type="entry name" value="Ribosomal_bL12_oligo_N_sf"/>
</dbReference>
<dbReference type="NCBIfam" id="TIGR00855">
    <property type="entry name" value="L12"/>
    <property type="match status" value="1"/>
</dbReference>
<dbReference type="PANTHER" id="PTHR45987">
    <property type="entry name" value="39S RIBOSOMAL PROTEIN L12"/>
    <property type="match status" value="1"/>
</dbReference>
<dbReference type="PANTHER" id="PTHR45987:SF4">
    <property type="entry name" value="LARGE RIBOSOMAL SUBUNIT PROTEIN BL12M"/>
    <property type="match status" value="1"/>
</dbReference>
<dbReference type="Pfam" id="PF00542">
    <property type="entry name" value="Ribosomal_L12"/>
    <property type="match status" value="1"/>
</dbReference>
<dbReference type="Pfam" id="PF16320">
    <property type="entry name" value="Ribosomal_L12_N"/>
    <property type="match status" value="1"/>
</dbReference>
<dbReference type="SUPFAM" id="SSF54736">
    <property type="entry name" value="ClpS-like"/>
    <property type="match status" value="1"/>
</dbReference>
<dbReference type="SUPFAM" id="SSF48300">
    <property type="entry name" value="Ribosomal protein L7/12, oligomerisation (N-terminal) domain"/>
    <property type="match status" value="1"/>
</dbReference>